<accession>B2U3T4</accession>
<feature type="chain" id="PRO_1000193654" description="Gamma-glutamyl phosphate reductase">
    <location>
        <begin position="1"/>
        <end position="417"/>
    </location>
</feature>
<protein>
    <recommendedName>
        <fullName evidence="1">Gamma-glutamyl phosphate reductase</fullName>
        <shortName evidence="1">GPR</shortName>
        <ecNumber evidence="1">1.2.1.41</ecNumber>
    </recommendedName>
    <alternativeName>
        <fullName evidence="1">Glutamate-5-semialdehyde dehydrogenase</fullName>
    </alternativeName>
    <alternativeName>
        <fullName evidence="1">Glutamyl-gamma-semialdehyde dehydrogenase</fullName>
        <shortName evidence="1">GSA dehydrogenase</shortName>
    </alternativeName>
</protein>
<organism>
    <name type="scientific">Shigella boydii serotype 18 (strain CDC 3083-94 / BS512)</name>
    <dbReference type="NCBI Taxonomy" id="344609"/>
    <lineage>
        <taxon>Bacteria</taxon>
        <taxon>Pseudomonadati</taxon>
        <taxon>Pseudomonadota</taxon>
        <taxon>Gammaproteobacteria</taxon>
        <taxon>Enterobacterales</taxon>
        <taxon>Enterobacteriaceae</taxon>
        <taxon>Shigella</taxon>
    </lineage>
</organism>
<keyword id="KW-0028">Amino-acid biosynthesis</keyword>
<keyword id="KW-0963">Cytoplasm</keyword>
<keyword id="KW-0521">NADP</keyword>
<keyword id="KW-0560">Oxidoreductase</keyword>
<keyword id="KW-0641">Proline biosynthesis</keyword>
<keyword id="KW-1185">Reference proteome</keyword>
<gene>
    <name evidence="1" type="primary">proA</name>
    <name type="ordered locus">SbBS512_E0240</name>
</gene>
<dbReference type="EC" id="1.2.1.41" evidence="1"/>
<dbReference type="EMBL" id="CP001063">
    <property type="protein sequence ID" value="ACD07183.1"/>
    <property type="molecule type" value="Genomic_DNA"/>
</dbReference>
<dbReference type="RefSeq" id="WP_000893275.1">
    <property type="nucleotide sequence ID" value="NC_010658.1"/>
</dbReference>
<dbReference type="SMR" id="B2U3T4"/>
<dbReference type="STRING" id="344609.SbBS512_E0240"/>
<dbReference type="KEGG" id="sbc:SbBS512_E0240"/>
<dbReference type="HOGENOM" id="CLU_030231_0_0_6"/>
<dbReference type="UniPathway" id="UPA00098">
    <property type="reaction ID" value="UER00360"/>
</dbReference>
<dbReference type="Proteomes" id="UP000001030">
    <property type="component" value="Chromosome"/>
</dbReference>
<dbReference type="GO" id="GO:0005737">
    <property type="term" value="C:cytoplasm"/>
    <property type="evidence" value="ECO:0007669"/>
    <property type="project" value="UniProtKB-SubCell"/>
</dbReference>
<dbReference type="GO" id="GO:0004350">
    <property type="term" value="F:glutamate-5-semialdehyde dehydrogenase activity"/>
    <property type="evidence" value="ECO:0007669"/>
    <property type="project" value="UniProtKB-UniRule"/>
</dbReference>
<dbReference type="GO" id="GO:0050661">
    <property type="term" value="F:NADP binding"/>
    <property type="evidence" value="ECO:0007669"/>
    <property type="project" value="InterPro"/>
</dbReference>
<dbReference type="GO" id="GO:0055129">
    <property type="term" value="P:L-proline biosynthetic process"/>
    <property type="evidence" value="ECO:0007669"/>
    <property type="project" value="UniProtKB-UniRule"/>
</dbReference>
<dbReference type="CDD" id="cd07079">
    <property type="entry name" value="ALDH_F18-19_ProA-GPR"/>
    <property type="match status" value="1"/>
</dbReference>
<dbReference type="FunFam" id="3.40.309.10:FF:000006">
    <property type="entry name" value="Gamma-glutamyl phosphate reductase"/>
    <property type="match status" value="1"/>
</dbReference>
<dbReference type="Gene3D" id="3.40.605.10">
    <property type="entry name" value="Aldehyde Dehydrogenase, Chain A, domain 1"/>
    <property type="match status" value="1"/>
</dbReference>
<dbReference type="Gene3D" id="3.40.309.10">
    <property type="entry name" value="Aldehyde Dehydrogenase, Chain A, domain 2"/>
    <property type="match status" value="1"/>
</dbReference>
<dbReference type="HAMAP" id="MF_00412">
    <property type="entry name" value="ProA"/>
    <property type="match status" value="1"/>
</dbReference>
<dbReference type="InterPro" id="IPR016161">
    <property type="entry name" value="Ald_DH/histidinol_DH"/>
</dbReference>
<dbReference type="InterPro" id="IPR016163">
    <property type="entry name" value="Ald_DH_C"/>
</dbReference>
<dbReference type="InterPro" id="IPR016162">
    <property type="entry name" value="Ald_DH_N"/>
</dbReference>
<dbReference type="InterPro" id="IPR015590">
    <property type="entry name" value="Aldehyde_DH_dom"/>
</dbReference>
<dbReference type="InterPro" id="IPR020593">
    <property type="entry name" value="G-glutamylP_reductase_CS"/>
</dbReference>
<dbReference type="InterPro" id="IPR012134">
    <property type="entry name" value="Glu-5-SA_DH"/>
</dbReference>
<dbReference type="InterPro" id="IPR000965">
    <property type="entry name" value="GPR_dom"/>
</dbReference>
<dbReference type="NCBIfam" id="NF001221">
    <property type="entry name" value="PRK00197.1"/>
    <property type="match status" value="1"/>
</dbReference>
<dbReference type="NCBIfam" id="TIGR00407">
    <property type="entry name" value="proA"/>
    <property type="match status" value="1"/>
</dbReference>
<dbReference type="PANTHER" id="PTHR11063:SF8">
    <property type="entry name" value="DELTA-1-PYRROLINE-5-CARBOXYLATE SYNTHASE"/>
    <property type="match status" value="1"/>
</dbReference>
<dbReference type="PANTHER" id="PTHR11063">
    <property type="entry name" value="GLUTAMATE SEMIALDEHYDE DEHYDROGENASE"/>
    <property type="match status" value="1"/>
</dbReference>
<dbReference type="Pfam" id="PF00171">
    <property type="entry name" value="Aldedh"/>
    <property type="match status" value="1"/>
</dbReference>
<dbReference type="PIRSF" id="PIRSF000151">
    <property type="entry name" value="GPR"/>
    <property type="match status" value="1"/>
</dbReference>
<dbReference type="SUPFAM" id="SSF53720">
    <property type="entry name" value="ALDH-like"/>
    <property type="match status" value="1"/>
</dbReference>
<dbReference type="PROSITE" id="PS01223">
    <property type="entry name" value="PROA"/>
    <property type="match status" value="1"/>
</dbReference>
<proteinExistence type="inferred from homology"/>
<sequence length="417" mass="44577">MLEQMGIAAKQASYKLAQLSSREKNRVLEKIADELEAQSEIILNANAQDVADARANGLSEAMLDRLALTPARLKGIADDVRQVCNLADPVGQVIDGGVLDSGLRLERRRVPLGVIGVIYEARPNVTVDVASLCLKTGNAVILRGGKETCRTNAATVAVIQDALKSCGLPAGAVQAIDNPDRALVSEMLRMDKYIDMLIPRGGAGLHKLCREQSTIPVITGGIGVCHIYVDESVEIAEALKVIVNAKTQRPSTCNTVETLLVNKNIADSFLPALSKQMAESGVTLHADAAALAQLQAGPAKVVAVKAEEYDDEFLSLDLNVKIVSDLDDAIAHIREHGTQHSDAILTCDMRNAQRFVNEVDSSAVYVNASTRFTDGGQFGLGAEVAVSTQKLHARGPMGLEALTTYKWIGIGDYTIRA</sequence>
<comment type="function">
    <text evidence="1">Catalyzes the NADPH-dependent reduction of L-glutamate 5-phosphate into L-glutamate 5-semialdehyde and phosphate. The product spontaneously undergoes cyclization to form 1-pyrroline-5-carboxylate.</text>
</comment>
<comment type="catalytic activity">
    <reaction evidence="1">
        <text>L-glutamate 5-semialdehyde + phosphate + NADP(+) = L-glutamyl 5-phosphate + NADPH + H(+)</text>
        <dbReference type="Rhea" id="RHEA:19541"/>
        <dbReference type="ChEBI" id="CHEBI:15378"/>
        <dbReference type="ChEBI" id="CHEBI:43474"/>
        <dbReference type="ChEBI" id="CHEBI:57783"/>
        <dbReference type="ChEBI" id="CHEBI:58066"/>
        <dbReference type="ChEBI" id="CHEBI:58274"/>
        <dbReference type="ChEBI" id="CHEBI:58349"/>
        <dbReference type="EC" id="1.2.1.41"/>
    </reaction>
</comment>
<comment type="pathway">
    <text evidence="1">Amino-acid biosynthesis; L-proline biosynthesis; L-glutamate 5-semialdehyde from L-glutamate: step 2/2.</text>
</comment>
<comment type="subcellular location">
    <subcellularLocation>
        <location evidence="1">Cytoplasm</location>
    </subcellularLocation>
</comment>
<comment type="similarity">
    <text evidence="1">Belongs to the gamma-glutamyl phosphate reductase family.</text>
</comment>
<reference key="1">
    <citation type="submission" date="2008-05" db="EMBL/GenBank/DDBJ databases">
        <title>Complete sequence of Shigella boydii serotype 18 strain BS512.</title>
        <authorList>
            <person name="Rasko D.A."/>
            <person name="Rosovitz M."/>
            <person name="Maurelli A.T."/>
            <person name="Myers G."/>
            <person name="Seshadri R."/>
            <person name="Cer R."/>
            <person name="Jiang L."/>
            <person name="Ravel J."/>
            <person name="Sebastian Y."/>
        </authorList>
    </citation>
    <scope>NUCLEOTIDE SEQUENCE [LARGE SCALE GENOMIC DNA]</scope>
    <source>
        <strain>CDC 3083-94 / BS512</strain>
    </source>
</reference>
<name>PROA_SHIB3</name>
<evidence type="ECO:0000255" key="1">
    <source>
        <dbReference type="HAMAP-Rule" id="MF_00412"/>
    </source>
</evidence>